<gene>
    <name evidence="1" type="primary">hemA</name>
    <name type="ordered locus">SE_1347</name>
</gene>
<protein>
    <recommendedName>
        <fullName evidence="1">Glutamyl-tRNA reductase</fullName>
        <shortName evidence="1">GluTR</shortName>
        <ecNumber evidence="1">1.2.1.70</ecNumber>
    </recommendedName>
</protein>
<evidence type="ECO:0000255" key="1">
    <source>
        <dbReference type="HAMAP-Rule" id="MF_00087"/>
    </source>
</evidence>
<feature type="chain" id="PRO_0000114073" description="Glutamyl-tRNA reductase">
    <location>
        <begin position="1"/>
        <end position="448"/>
    </location>
</feature>
<feature type="active site" description="Nucleophile" evidence="1">
    <location>
        <position position="50"/>
    </location>
</feature>
<feature type="binding site" evidence="1">
    <location>
        <begin position="49"/>
        <end position="52"/>
    </location>
    <ligand>
        <name>substrate</name>
    </ligand>
</feature>
<feature type="binding site" evidence="1">
    <location>
        <position position="109"/>
    </location>
    <ligand>
        <name>substrate</name>
    </ligand>
</feature>
<feature type="binding site" evidence="1">
    <location>
        <begin position="114"/>
        <end position="116"/>
    </location>
    <ligand>
        <name>substrate</name>
    </ligand>
</feature>
<feature type="binding site" evidence="1">
    <location>
        <position position="120"/>
    </location>
    <ligand>
        <name>substrate</name>
    </ligand>
</feature>
<feature type="binding site" evidence="1">
    <location>
        <begin position="189"/>
        <end position="194"/>
    </location>
    <ligand>
        <name>NADP(+)</name>
        <dbReference type="ChEBI" id="CHEBI:58349"/>
    </ligand>
</feature>
<feature type="site" description="Important for activity" evidence="1">
    <location>
        <position position="99"/>
    </location>
</feature>
<name>HEM1_STAES</name>
<proteinExistence type="inferred from homology"/>
<organism>
    <name type="scientific">Staphylococcus epidermidis (strain ATCC 12228 / FDA PCI 1200)</name>
    <dbReference type="NCBI Taxonomy" id="176280"/>
    <lineage>
        <taxon>Bacteria</taxon>
        <taxon>Bacillati</taxon>
        <taxon>Bacillota</taxon>
        <taxon>Bacilli</taxon>
        <taxon>Bacillales</taxon>
        <taxon>Staphylococcaceae</taxon>
        <taxon>Staphylococcus</taxon>
    </lineage>
</organism>
<sequence>MHFVAISINHRTADVTLREQVAFRDDALRLAHEDLYETKAILENVILSTCNRTEVYAIVDQVHTGRYYIQRFLARSFGFEVDDIKDMSQVKVGDDAVEHLLRVTSGLDSIVLGETQILGQMRDAFFLAQNTGTTGTIFNHLFKQAITFAKKAHSETDIADNAVSVSYAAVELAKKVFGKLKSKHAVVIGAGEMGELSLLNLLGSGISNVTIVNRTLSKAKILAEKHNVSYDSLSALPSLLETTDIVISSTSAEDYIITNSMVKTISETRKLDSLVLIDIAVPRDIEPGIDAITNIFNYDVDDLKDLVDANLRERQLAAETIAGQIPEEIDSHNEWVNMLGVVPVIRALREKAMNIQAETMESIDRKLPDLSERERKVISKHTKSIINQMLKDPIKQAKELSTDKKSNEKLELFQNIFDIEAEDPREKAKLEKESRAKEILAHRIFSFE</sequence>
<accession>Q8CNY6</accession>
<dbReference type="EC" id="1.2.1.70" evidence="1"/>
<dbReference type="EMBL" id="AE015929">
    <property type="protein sequence ID" value="AAO04946.1"/>
    <property type="molecule type" value="Genomic_DNA"/>
</dbReference>
<dbReference type="RefSeq" id="NP_764902.1">
    <property type="nucleotide sequence ID" value="NC_004461.1"/>
</dbReference>
<dbReference type="RefSeq" id="WP_002485649.1">
    <property type="nucleotide sequence ID" value="NZ_WBME01000016.1"/>
</dbReference>
<dbReference type="SMR" id="Q8CNY6"/>
<dbReference type="KEGG" id="sep:SE_1347"/>
<dbReference type="PATRIC" id="fig|176280.10.peg.1316"/>
<dbReference type="eggNOG" id="COG0373">
    <property type="taxonomic scope" value="Bacteria"/>
</dbReference>
<dbReference type="HOGENOM" id="CLU_035113_2_2_9"/>
<dbReference type="OrthoDB" id="110209at2"/>
<dbReference type="UniPathway" id="UPA00251">
    <property type="reaction ID" value="UER00316"/>
</dbReference>
<dbReference type="Proteomes" id="UP000001411">
    <property type="component" value="Chromosome"/>
</dbReference>
<dbReference type="GO" id="GO:0008883">
    <property type="term" value="F:glutamyl-tRNA reductase activity"/>
    <property type="evidence" value="ECO:0007669"/>
    <property type="project" value="UniProtKB-UniRule"/>
</dbReference>
<dbReference type="GO" id="GO:0050661">
    <property type="term" value="F:NADP binding"/>
    <property type="evidence" value="ECO:0007669"/>
    <property type="project" value="InterPro"/>
</dbReference>
<dbReference type="GO" id="GO:0006782">
    <property type="term" value="P:protoporphyrinogen IX biosynthetic process"/>
    <property type="evidence" value="ECO:0007669"/>
    <property type="project" value="UniProtKB-UniRule"/>
</dbReference>
<dbReference type="CDD" id="cd05213">
    <property type="entry name" value="NAD_bind_Glutamyl_tRNA_reduct"/>
    <property type="match status" value="1"/>
</dbReference>
<dbReference type="FunFam" id="3.30.460.30:FF:000001">
    <property type="entry name" value="Glutamyl-tRNA reductase"/>
    <property type="match status" value="1"/>
</dbReference>
<dbReference type="FunFam" id="3.40.50.720:FF:000031">
    <property type="entry name" value="Glutamyl-tRNA reductase"/>
    <property type="match status" value="1"/>
</dbReference>
<dbReference type="Gene3D" id="3.30.460.30">
    <property type="entry name" value="Glutamyl-tRNA reductase, N-terminal domain"/>
    <property type="match status" value="1"/>
</dbReference>
<dbReference type="Gene3D" id="3.40.50.720">
    <property type="entry name" value="NAD(P)-binding Rossmann-like Domain"/>
    <property type="match status" value="1"/>
</dbReference>
<dbReference type="HAMAP" id="MF_00087">
    <property type="entry name" value="Glu_tRNA_reductase"/>
    <property type="match status" value="1"/>
</dbReference>
<dbReference type="InterPro" id="IPR000343">
    <property type="entry name" value="4pyrrol_synth_GluRdtase"/>
</dbReference>
<dbReference type="InterPro" id="IPR015896">
    <property type="entry name" value="4pyrrol_synth_GluRdtase_dimer"/>
</dbReference>
<dbReference type="InterPro" id="IPR015895">
    <property type="entry name" value="4pyrrol_synth_GluRdtase_N"/>
</dbReference>
<dbReference type="InterPro" id="IPR018214">
    <property type="entry name" value="GluRdtase_CS"/>
</dbReference>
<dbReference type="InterPro" id="IPR036453">
    <property type="entry name" value="GluRdtase_dimer_dom_sf"/>
</dbReference>
<dbReference type="InterPro" id="IPR036343">
    <property type="entry name" value="GluRdtase_N_sf"/>
</dbReference>
<dbReference type="InterPro" id="IPR036291">
    <property type="entry name" value="NAD(P)-bd_dom_sf"/>
</dbReference>
<dbReference type="InterPro" id="IPR006151">
    <property type="entry name" value="Shikm_DH/Glu-tRNA_Rdtase"/>
</dbReference>
<dbReference type="NCBIfam" id="TIGR01035">
    <property type="entry name" value="hemA"/>
    <property type="match status" value="1"/>
</dbReference>
<dbReference type="PANTHER" id="PTHR43120">
    <property type="entry name" value="GLUTAMYL-TRNA REDUCTASE 1, CHLOROPLASTIC"/>
    <property type="match status" value="1"/>
</dbReference>
<dbReference type="PANTHER" id="PTHR43120:SF1">
    <property type="entry name" value="GLUTAMYL-TRNA REDUCTASE 1, CHLOROPLASTIC"/>
    <property type="match status" value="1"/>
</dbReference>
<dbReference type="Pfam" id="PF00745">
    <property type="entry name" value="GlutR_dimer"/>
    <property type="match status" value="1"/>
</dbReference>
<dbReference type="Pfam" id="PF05201">
    <property type="entry name" value="GlutR_N"/>
    <property type="match status" value="1"/>
</dbReference>
<dbReference type="Pfam" id="PF01488">
    <property type="entry name" value="Shikimate_DH"/>
    <property type="match status" value="1"/>
</dbReference>
<dbReference type="PIRSF" id="PIRSF000445">
    <property type="entry name" value="4pyrrol_synth_GluRdtase"/>
    <property type="match status" value="1"/>
</dbReference>
<dbReference type="SUPFAM" id="SSF69742">
    <property type="entry name" value="Glutamyl tRNA-reductase catalytic, N-terminal domain"/>
    <property type="match status" value="1"/>
</dbReference>
<dbReference type="SUPFAM" id="SSF69075">
    <property type="entry name" value="Glutamyl tRNA-reductase dimerization domain"/>
    <property type="match status" value="1"/>
</dbReference>
<dbReference type="SUPFAM" id="SSF51735">
    <property type="entry name" value="NAD(P)-binding Rossmann-fold domains"/>
    <property type="match status" value="1"/>
</dbReference>
<dbReference type="PROSITE" id="PS00747">
    <property type="entry name" value="GLUTR"/>
    <property type="match status" value="1"/>
</dbReference>
<comment type="function">
    <text evidence="1">Catalyzes the NADPH-dependent reduction of glutamyl-tRNA(Glu) to glutamate 1-semialdehyde (GSA).</text>
</comment>
<comment type="catalytic activity">
    <reaction evidence="1">
        <text>(S)-4-amino-5-oxopentanoate + tRNA(Glu) + NADP(+) = L-glutamyl-tRNA(Glu) + NADPH + H(+)</text>
        <dbReference type="Rhea" id="RHEA:12344"/>
        <dbReference type="Rhea" id="RHEA-COMP:9663"/>
        <dbReference type="Rhea" id="RHEA-COMP:9680"/>
        <dbReference type="ChEBI" id="CHEBI:15378"/>
        <dbReference type="ChEBI" id="CHEBI:57501"/>
        <dbReference type="ChEBI" id="CHEBI:57783"/>
        <dbReference type="ChEBI" id="CHEBI:58349"/>
        <dbReference type="ChEBI" id="CHEBI:78442"/>
        <dbReference type="ChEBI" id="CHEBI:78520"/>
        <dbReference type="EC" id="1.2.1.70"/>
    </reaction>
</comment>
<comment type="pathway">
    <text evidence="1">Porphyrin-containing compound metabolism; protoporphyrin-IX biosynthesis; 5-aminolevulinate from L-glutamyl-tRNA(Glu): step 1/2.</text>
</comment>
<comment type="subunit">
    <text evidence="1">Homodimer.</text>
</comment>
<comment type="domain">
    <text evidence="1">Possesses an unusual extended V-shaped dimeric structure with each monomer consisting of three distinct domains arranged along a curved 'spinal' alpha-helix. The N-terminal catalytic domain specifically recognizes the glutamate moiety of the substrate. The second domain is the NADPH-binding domain, and the third C-terminal domain is responsible for dimerization.</text>
</comment>
<comment type="miscellaneous">
    <text evidence="1">During catalysis, the active site Cys acts as a nucleophile attacking the alpha-carbonyl group of tRNA-bound glutamate with the formation of a thioester intermediate between enzyme and glutamate, and the concomitant release of tRNA(Glu). The thioester intermediate is finally reduced by direct hydride transfer from NADPH, to form the product GSA.</text>
</comment>
<comment type="similarity">
    <text evidence="1">Belongs to the glutamyl-tRNA reductase family.</text>
</comment>
<reference key="1">
    <citation type="journal article" date="2003" name="Mol. Microbiol.">
        <title>Genome-based analysis of virulence genes in a non-biofilm-forming Staphylococcus epidermidis strain (ATCC 12228).</title>
        <authorList>
            <person name="Zhang Y.-Q."/>
            <person name="Ren S.-X."/>
            <person name="Li H.-L."/>
            <person name="Wang Y.-X."/>
            <person name="Fu G."/>
            <person name="Yang J."/>
            <person name="Qin Z.-Q."/>
            <person name="Miao Y.-G."/>
            <person name="Wang W.-Y."/>
            <person name="Chen R.-S."/>
            <person name="Shen Y."/>
            <person name="Chen Z."/>
            <person name="Yuan Z.-H."/>
            <person name="Zhao G.-P."/>
            <person name="Qu D."/>
            <person name="Danchin A."/>
            <person name="Wen Y.-M."/>
        </authorList>
    </citation>
    <scope>NUCLEOTIDE SEQUENCE [LARGE SCALE GENOMIC DNA]</scope>
    <source>
        <strain>ATCC 12228 / FDA PCI 1200</strain>
    </source>
</reference>
<keyword id="KW-0521">NADP</keyword>
<keyword id="KW-0560">Oxidoreductase</keyword>
<keyword id="KW-0627">Porphyrin biosynthesis</keyword>